<keyword id="KW-0963">Cytoplasm</keyword>
<keyword id="KW-0269">Exonuclease</keyword>
<keyword id="KW-0378">Hydrolase</keyword>
<keyword id="KW-0540">Nuclease</keyword>
<keyword id="KW-1185">Reference proteome</keyword>
<protein>
    <recommendedName>
        <fullName evidence="1">Exodeoxyribonuclease 7 large subunit</fullName>
        <ecNumber evidence="1">3.1.11.6</ecNumber>
    </recommendedName>
    <alternativeName>
        <fullName evidence="1">Exodeoxyribonuclease VII large subunit</fullName>
        <shortName evidence="1">Exonuclease VII large subunit</shortName>
    </alternativeName>
</protein>
<accession>A8I6A9</accession>
<comment type="function">
    <text evidence="1">Bidirectionally degrades single-stranded DNA into large acid-insoluble oligonucleotides, which are then degraded further into small acid-soluble oligonucleotides.</text>
</comment>
<comment type="catalytic activity">
    <reaction evidence="1">
        <text>Exonucleolytic cleavage in either 5'- to 3'- or 3'- to 5'-direction to yield nucleoside 5'-phosphates.</text>
        <dbReference type="EC" id="3.1.11.6"/>
    </reaction>
</comment>
<comment type="subunit">
    <text evidence="1">Heterooligomer composed of large and small subunits.</text>
</comment>
<comment type="subcellular location">
    <subcellularLocation>
        <location evidence="1">Cytoplasm</location>
    </subcellularLocation>
</comment>
<comment type="similarity">
    <text evidence="1">Belongs to the XseA family.</text>
</comment>
<sequence length="537" mass="58030">MPSDSMTDLPETRANAPEWTVSELSFALRRTVEDAYGHVRVRGEISGYRGPHSSGHAYFSIKDEGARLDAVIWKSAFARLKLRPEEGLEVVAVGKLTTYPGKSGYQIVIESLEFAGAGAIMAMLEERKRRLAAEGLFDAARKQELPFLPKVIGVVTSPTGAVIRDILHRLSDRFPRQVIVWPVRVQGETSAAEVAEAIRGFNALPEGGPIPRPDVLIVARGGGSLEDLLGFSDEAVVRAAAESFIPLVSAVGHETDVTLIDFAADVRAPTPTAAAEMVVPVRADLLAGIDAYGERLSAAPRRLLERRRADFRALARHLPTADALLAVPRQRLDAAGERLPRALRANAAAHRLAFEAVRTRHSASAFRLRLARAQDRVAALGGRLQWGLTGLVSRRSERLSAMTARFGSARAASLRAHVLHLSRCRERLSVLSTRAQRAVRHDLRERTNRLAAMEQLLKALSYRGVLARGFALVRDAQGGAVRAAGAVVPGARLELEFADGRLGVQALGEGAPVEPPQAARPSKGARTKAAQPSLFDD</sequence>
<reference key="1">
    <citation type="submission" date="2007-04" db="EMBL/GenBank/DDBJ databases">
        <title>Complete genome sequence of the nitrogen-fixing bacterium Azorhizobium caulinodans ORS571.</title>
        <authorList>
            <person name="Lee K.B."/>
            <person name="Backer P.D."/>
            <person name="Aono T."/>
            <person name="Liu C.T."/>
            <person name="Suzuki S."/>
            <person name="Suzuki T."/>
            <person name="Kaneko T."/>
            <person name="Yamada M."/>
            <person name="Tabata S."/>
            <person name="Kupfer D.M."/>
            <person name="Najar F.Z."/>
            <person name="Wiley G.B."/>
            <person name="Roe B."/>
            <person name="Binnewies T."/>
            <person name="Ussery D."/>
            <person name="Vereecke D."/>
            <person name="Gevers D."/>
            <person name="Holsters M."/>
            <person name="Oyaizu H."/>
        </authorList>
    </citation>
    <scope>NUCLEOTIDE SEQUENCE [LARGE SCALE GENOMIC DNA]</scope>
    <source>
        <strain>ATCC 43989 / DSM 5975 / JCM 20966 / LMG 6465 / NBRC 14845 / NCIMB 13405 / ORS 571</strain>
    </source>
</reference>
<gene>
    <name evidence="1" type="primary">xseA</name>
    <name type="ordered locus">AZC_2385</name>
</gene>
<name>EX7L_AZOC5</name>
<dbReference type="EC" id="3.1.11.6" evidence="1"/>
<dbReference type="EMBL" id="AP009384">
    <property type="protein sequence ID" value="BAF88383.1"/>
    <property type="molecule type" value="Genomic_DNA"/>
</dbReference>
<dbReference type="SMR" id="A8I6A9"/>
<dbReference type="STRING" id="438753.AZC_2385"/>
<dbReference type="KEGG" id="azc:AZC_2385"/>
<dbReference type="eggNOG" id="COG1570">
    <property type="taxonomic scope" value="Bacteria"/>
</dbReference>
<dbReference type="HOGENOM" id="CLU_023625_3_1_5"/>
<dbReference type="Proteomes" id="UP000000270">
    <property type="component" value="Chromosome"/>
</dbReference>
<dbReference type="GO" id="GO:0005737">
    <property type="term" value="C:cytoplasm"/>
    <property type="evidence" value="ECO:0007669"/>
    <property type="project" value="UniProtKB-SubCell"/>
</dbReference>
<dbReference type="GO" id="GO:0009318">
    <property type="term" value="C:exodeoxyribonuclease VII complex"/>
    <property type="evidence" value="ECO:0007669"/>
    <property type="project" value="InterPro"/>
</dbReference>
<dbReference type="GO" id="GO:0008855">
    <property type="term" value="F:exodeoxyribonuclease VII activity"/>
    <property type="evidence" value="ECO:0007669"/>
    <property type="project" value="UniProtKB-UniRule"/>
</dbReference>
<dbReference type="GO" id="GO:0003676">
    <property type="term" value="F:nucleic acid binding"/>
    <property type="evidence" value="ECO:0007669"/>
    <property type="project" value="InterPro"/>
</dbReference>
<dbReference type="GO" id="GO:0006308">
    <property type="term" value="P:DNA catabolic process"/>
    <property type="evidence" value="ECO:0007669"/>
    <property type="project" value="UniProtKB-UniRule"/>
</dbReference>
<dbReference type="CDD" id="cd04489">
    <property type="entry name" value="ExoVII_LU_OBF"/>
    <property type="match status" value="1"/>
</dbReference>
<dbReference type="HAMAP" id="MF_00378">
    <property type="entry name" value="Exonuc_7_L"/>
    <property type="match status" value="1"/>
</dbReference>
<dbReference type="InterPro" id="IPR003753">
    <property type="entry name" value="Exonuc_VII_L"/>
</dbReference>
<dbReference type="InterPro" id="IPR020579">
    <property type="entry name" value="Exonuc_VII_lsu_C"/>
</dbReference>
<dbReference type="InterPro" id="IPR025824">
    <property type="entry name" value="OB-fold_nuc-bd_dom"/>
</dbReference>
<dbReference type="NCBIfam" id="TIGR00237">
    <property type="entry name" value="xseA"/>
    <property type="match status" value="1"/>
</dbReference>
<dbReference type="PANTHER" id="PTHR30008">
    <property type="entry name" value="EXODEOXYRIBONUCLEASE 7 LARGE SUBUNIT"/>
    <property type="match status" value="1"/>
</dbReference>
<dbReference type="PANTHER" id="PTHR30008:SF0">
    <property type="entry name" value="EXODEOXYRIBONUCLEASE 7 LARGE SUBUNIT"/>
    <property type="match status" value="1"/>
</dbReference>
<dbReference type="Pfam" id="PF02601">
    <property type="entry name" value="Exonuc_VII_L"/>
    <property type="match status" value="2"/>
</dbReference>
<dbReference type="Pfam" id="PF13742">
    <property type="entry name" value="tRNA_anti_2"/>
    <property type="match status" value="1"/>
</dbReference>
<evidence type="ECO:0000255" key="1">
    <source>
        <dbReference type="HAMAP-Rule" id="MF_00378"/>
    </source>
</evidence>
<evidence type="ECO:0000256" key="2">
    <source>
        <dbReference type="SAM" id="MobiDB-lite"/>
    </source>
</evidence>
<feature type="chain" id="PRO_1000072159" description="Exodeoxyribonuclease 7 large subunit">
    <location>
        <begin position="1"/>
        <end position="537"/>
    </location>
</feature>
<feature type="region of interest" description="Disordered" evidence="2">
    <location>
        <begin position="508"/>
        <end position="537"/>
    </location>
</feature>
<proteinExistence type="inferred from homology"/>
<organism>
    <name type="scientific">Azorhizobium caulinodans (strain ATCC 43989 / DSM 5975 / JCM 20966 / LMG 6465 / NBRC 14845 / NCIMB 13405 / ORS 571)</name>
    <dbReference type="NCBI Taxonomy" id="438753"/>
    <lineage>
        <taxon>Bacteria</taxon>
        <taxon>Pseudomonadati</taxon>
        <taxon>Pseudomonadota</taxon>
        <taxon>Alphaproteobacteria</taxon>
        <taxon>Hyphomicrobiales</taxon>
        <taxon>Xanthobacteraceae</taxon>
        <taxon>Azorhizobium</taxon>
    </lineage>
</organism>